<dbReference type="EMBL" id="GU997622">
    <property type="protein sequence ID" value="ADF27719.1"/>
    <property type="molecule type" value="mRNA"/>
</dbReference>
<dbReference type="EMBL" id="BX284603">
    <property type="protein sequence ID" value="CCD69779.1"/>
    <property type="molecule type" value="Genomic_DNA"/>
</dbReference>
<dbReference type="RefSeq" id="NP_498455.2">
    <property type="nucleotide sequence ID" value="NM_066054.6"/>
</dbReference>
<dbReference type="FunCoup" id="O01737">
    <property type="interactions" value="2480"/>
</dbReference>
<dbReference type="STRING" id="6239.F20H11.2.1"/>
<dbReference type="PaxDb" id="6239-F20H11.2"/>
<dbReference type="PeptideAtlas" id="O01737"/>
<dbReference type="EnsemblMetazoa" id="F20H11.2.1">
    <property type="protein sequence ID" value="F20H11.2.1"/>
    <property type="gene ID" value="WBGene00002889"/>
</dbReference>
<dbReference type="GeneID" id="175934"/>
<dbReference type="KEGG" id="cel:CELE_F20H11.2"/>
<dbReference type="UCSC" id="F20H11.2">
    <property type="organism name" value="c. elegans"/>
</dbReference>
<dbReference type="AGR" id="WB:WBGene00002889"/>
<dbReference type="CTD" id="175934"/>
<dbReference type="WormBase" id="F20H11.2">
    <property type="protein sequence ID" value="CE45139"/>
    <property type="gene ID" value="WBGene00002889"/>
    <property type="gene designation" value="let-765"/>
</dbReference>
<dbReference type="eggNOG" id="KOG1513">
    <property type="taxonomic scope" value="Eukaryota"/>
</dbReference>
<dbReference type="GeneTree" id="ENSGT00940000167724"/>
<dbReference type="HOGENOM" id="CLU_000212_2_1_1"/>
<dbReference type="InParanoid" id="O01737"/>
<dbReference type="OMA" id="KLWMEAR"/>
<dbReference type="OrthoDB" id="421838at2759"/>
<dbReference type="PhylomeDB" id="O01737"/>
<dbReference type="PRO" id="PR:O01737"/>
<dbReference type="Proteomes" id="UP000001940">
    <property type="component" value="Chromosome III"/>
</dbReference>
<dbReference type="Bgee" id="WBGene00002889">
    <property type="expression patterns" value="Expressed in embryo and 3 other cell types or tissues"/>
</dbReference>
<dbReference type="GO" id="GO:0005634">
    <property type="term" value="C:nucleus"/>
    <property type="evidence" value="ECO:0000314"/>
    <property type="project" value="WormBase"/>
</dbReference>
<dbReference type="GO" id="GO:0031490">
    <property type="term" value="F:chromatin DNA binding"/>
    <property type="evidence" value="ECO:0000318"/>
    <property type="project" value="GO_Central"/>
</dbReference>
<dbReference type="GO" id="GO:0042393">
    <property type="term" value="F:histone binding"/>
    <property type="evidence" value="ECO:0000318"/>
    <property type="project" value="GO_Central"/>
</dbReference>
<dbReference type="GO" id="GO:0045138">
    <property type="term" value="P:nematode male tail tip morphogenesis"/>
    <property type="evidence" value="ECO:0000315"/>
    <property type="project" value="WormBase"/>
</dbReference>
<dbReference type="GO" id="GO:0042660">
    <property type="term" value="P:positive regulation of cell fate specification"/>
    <property type="evidence" value="ECO:0000315"/>
    <property type="project" value="WormBase"/>
</dbReference>
<dbReference type="GO" id="GO:0046579">
    <property type="term" value="P:positive regulation of Ras protein signal transduction"/>
    <property type="evidence" value="ECO:0000316"/>
    <property type="project" value="WormBase"/>
</dbReference>
<dbReference type="GO" id="GO:0006355">
    <property type="term" value="P:regulation of DNA-templated transcription"/>
    <property type="evidence" value="ECO:0000318"/>
    <property type="project" value="GO_Central"/>
</dbReference>
<dbReference type="GO" id="GO:0072327">
    <property type="term" value="P:vulval cell fate specification"/>
    <property type="evidence" value="ECO:0000315"/>
    <property type="project" value="WormBase"/>
</dbReference>
<dbReference type="FunFam" id="3.40.50.300:FF:000342">
    <property type="entry name" value="Protein strawberry notch homolog 2"/>
    <property type="match status" value="1"/>
</dbReference>
<dbReference type="Gene3D" id="3.40.50.300">
    <property type="entry name" value="P-loop containing nucleotide triphosphate hydrolases"/>
    <property type="match status" value="1"/>
</dbReference>
<dbReference type="InterPro" id="IPR027417">
    <property type="entry name" value="P-loop_NTPase"/>
</dbReference>
<dbReference type="InterPro" id="IPR026937">
    <property type="entry name" value="SBNO_Helicase_C_dom"/>
</dbReference>
<dbReference type="InterPro" id="IPR026741">
    <property type="entry name" value="SNO"/>
</dbReference>
<dbReference type="InterPro" id="IPR039187">
    <property type="entry name" value="SNO_AAA"/>
</dbReference>
<dbReference type="PANTHER" id="PTHR12706:SF30">
    <property type="entry name" value="PROTEIN STRAWBERRY NOTCH-RELATED"/>
    <property type="match status" value="1"/>
</dbReference>
<dbReference type="PANTHER" id="PTHR12706">
    <property type="entry name" value="STRAWBERRY NOTCH-RELATED"/>
    <property type="match status" value="1"/>
</dbReference>
<dbReference type="Pfam" id="PF13872">
    <property type="entry name" value="AAA_34"/>
    <property type="match status" value="1"/>
</dbReference>
<dbReference type="Pfam" id="PF13871">
    <property type="entry name" value="Helicase_C_4"/>
    <property type="match status" value="1"/>
</dbReference>
<dbReference type="Pfam" id="PF25373">
    <property type="entry name" value="SBNO"/>
    <property type="match status" value="1"/>
</dbReference>
<dbReference type="SUPFAM" id="SSF52540">
    <property type="entry name" value="P-loop containing nucleoside triphosphate hydrolases"/>
    <property type="match status" value="2"/>
</dbReference>
<feature type="chain" id="PRO_0000448279" description="Protein strawberry notch homolog">
    <location>
        <begin position="1"/>
        <end position="1866"/>
    </location>
</feature>
<feature type="region of interest" description="Disordered" evidence="1">
    <location>
        <begin position="19"/>
        <end position="63"/>
    </location>
</feature>
<feature type="region of interest" description="Disordered" evidence="1">
    <location>
        <begin position="132"/>
        <end position="151"/>
    </location>
</feature>
<feature type="region of interest" description="Disordered" evidence="1">
    <location>
        <begin position="156"/>
        <end position="253"/>
    </location>
</feature>
<feature type="region of interest" description="Disordered" evidence="1">
    <location>
        <begin position="561"/>
        <end position="581"/>
    </location>
</feature>
<feature type="region of interest" description="Disordered" evidence="1">
    <location>
        <begin position="1112"/>
        <end position="1308"/>
    </location>
</feature>
<feature type="compositionally biased region" description="Low complexity" evidence="1">
    <location>
        <begin position="19"/>
        <end position="28"/>
    </location>
</feature>
<feature type="compositionally biased region" description="Polar residues" evidence="1">
    <location>
        <begin position="37"/>
        <end position="63"/>
    </location>
</feature>
<feature type="compositionally biased region" description="Polar residues" evidence="1">
    <location>
        <begin position="134"/>
        <end position="146"/>
    </location>
</feature>
<feature type="compositionally biased region" description="Low complexity" evidence="1">
    <location>
        <begin position="161"/>
        <end position="176"/>
    </location>
</feature>
<feature type="compositionally biased region" description="Polar residues" evidence="1">
    <location>
        <begin position="191"/>
        <end position="203"/>
    </location>
</feature>
<feature type="compositionally biased region" description="Polar residues" evidence="1">
    <location>
        <begin position="210"/>
        <end position="228"/>
    </location>
</feature>
<feature type="compositionally biased region" description="Low complexity" evidence="1">
    <location>
        <begin position="229"/>
        <end position="239"/>
    </location>
</feature>
<feature type="compositionally biased region" description="Polar residues" evidence="1">
    <location>
        <begin position="566"/>
        <end position="577"/>
    </location>
</feature>
<feature type="compositionally biased region" description="Low complexity" evidence="1">
    <location>
        <begin position="1112"/>
        <end position="1126"/>
    </location>
</feature>
<feature type="compositionally biased region" description="Acidic residues" evidence="1">
    <location>
        <begin position="1142"/>
        <end position="1152"/>
    </location>
</feature>
<feature type="compositionally biased region" description="Basic and acidic residues" evidence="1">
    <location>
        <begin position="1164"/>
        <end position="1177"/>
    </location>
</feature>
<feature type="compositionally biased region" description="Acidic residues" evidence="1">
    <location>
        <begin position="1194"/>
        <end position="1213"/>
    </location>
</feature>
<feature type="compositionally biased region" description="Basic and acidic residues" evidence="1">
    <location>
        <begin position="1262"/>
        <end position="1281"/>
    </location>
</feature>
<feature type="compositionally biased region" description="Basic and acidic residues" evidence="1">
    <location>
        <begin position="1290"/>
        <end position="1304"/>
    </location>
</feature>
<feature type="mutagenesis site" description="In s2575; larvae arrest during the L2 larval stage." evidence="2">
    <location>
        <begin position="381"/>
        <end position="1866"/>
    </location>
</feature>
<feature type="mutagenesis site" description="In s2630; larvae arrest during the L1 to L2 transition." evidence="2">
    <location>
        <begin position="941"/>
        <end position="1866"/>
    </location>
</feature>
<gene>
    <name evidence="3 6" type="primary">let-765</name>
    <name evidence="6" type="synonym">let-745</name>
    <name evidence="3 6" type="synonym">nsh-1</name>
    <name evidence="6" type="ORF">F20H11.2</name>
</gene>
<reference evidence="4" key="1">
    <citation type="journal article" date="2010" name="Dev. Biol.">
        <title>A strawberry notch homolog, let-765/nsh-1, positively regulates lin-3/egf expression to promote RAS-dependent vulval induction in C. elegans.</title>
        <authorList>
            <person name="Simms C.L."/>
            <person name="Baillie D.L."/>
        </authorList>
    </citation>
    <scope>NUCLEOTIDE SEQUENCE [MRNA]</scope>
    <scope>FUNCTION</scope>
    <scope>SUBCELLULAR LOCATION</scope>
    <scope>TISSUE SPECIFICITY</scope>
    <scope>DEVELOPMENTAL STAGE</scope>
    <scope>DISRUPTION PHENOTYPE</scope>
    <scope>MUTAGENESIS OF 381-ARG--PRO-1866 AND 941-TRP--PRO-1866</scope>
</reference>
<reference evidence="5" key="2">
    <citation type="journal article" date="1998" name="Science">
        <title>Genome sequence of the nematode C. elegans: a platform for investigating biology.</title>
        <authorList>
            <consortium name="The C. elegans sequencing consortium"/>
        </authorList>
    </citation>
    <scope>NUCLEOTIDE SEQUENCE [LARGE SCALE GENOMIC DNA]</scope>
    <source>
        <strain evidence="5">Bristol N2</strain>
    </source>
</reference>
<name>SBNO_CAEEL</name>
<protein>
    <recommendedName>
        <fullName evidence="4">Protein strawberry notch homolog</fullName>
    </recommendedName>
    <alternativeName>
        <fullName evidence="6">Lethal protein 765</fullName>
    </alternativeName>
    <alternativeName>
        <fullName evidence="3">Notch signaling pathway homolog 1</fullName>
    </alternativeName>
</protein>
<evidence type="ECO:0000256" key="1">
    <source>
        <dbReference type="SAM" id="MobiDB-lite"/>
    </source>
</evidence>
<evidence type="ECO:0000269" key="2">
    <source>
    </source>
</evidence>
<evidence type="ECO:0000303" key="3">
    <source>
    </source>
</evidence>
<evidence type="ECO:0000305" key="4"/>
<evidence type="ECO:0000312" key="5">
    <source>
        <dbReference type="Proteomes" id="UP000001940"/>
    </source>
</evidence>
<evidence type="ECO:0000312" key="6">
    <source>
        <dbReference type="WormBase" id="F20H11.2"/>
    </source>
</evidence>
<keyword id="KW-0539">Nucleus</keyword>
<keyword id="KW-1185">Reference proteome</keyword>
<keyword id="KW-0804">Transcription</keyword>
<keyword id="KW-0805">Transcription regulation</keyword>
<comment type="function">
    <text evidence="2">Transcriptional activator that functions upstream of the let-60/Ras and let-23/EGFR signaling pathways to positively regulate lin-3 expression and thereby promote vulval induction (PubMed:20230814). Plays a role in excretory duct development (PubMed:20230814). Plays a role in male tail development (PubMed:20230814).</text>
</comment>
<comment type="subcellular location">
    <subcellularLocation>
        <location evidence="2">Nucleus</location>
    </subcellularLocation>
</comment>
<comment type="tissue specificity">
    <text evidence="2">Expressed in the somatic gonad, neurons, hypodermal cells, seam cells, the excretory system, and intestinal cells (at protein level).</text>
</comment>
<comment type="developmental stage">
    <text evidence="2">Expressed in most cells of the embryo beginning from the 100-cell stage (at protein level) (PubMed:20230814). Expressed throughout larval development in the excretory system, anterior neurons and the hypodermis (at protein level) (PubMed:20230814). Expressed in vulval precursor cells and their descendants during the mid-larval stages and is highly expressed in the somatic gonad from the L3 larval stage to adulthood (at protein level) (PubMed:20230814).</text>
</comment>
<comment type="disruption phenotype">
    <text evidence="2">RNAi-mediated knockdown results in embryonic or larval lethality (PubMed:20230814). Surviving animals exhibit slow growth, gonad migration defects, vulval induction defects and reduced lin-3 expression (PubMed:20230814). Larvae that develop into adults are sterile, and only few produce embryos (PubMed:20230814). RNAi-mediated knockdown in males results in tail defects including underdeveloped tails, spicule defects and missing rays (PubMed:20230814). RNAi-mediated knockdown in a lin-3 e1417 mutant background abolishes vulval induction (PubMed:20230814). RNAi-mediated knockdown in a let-23 sa62 gain of function mutant background partially suppresses the multivulva phenotype in the let-23 mutant (PubMed:20230814). RNAi-mediated knockdown in a let-60 n1046 gain of function mutant background suppresses the multivulva phenotype in the let-60 mutant (PubMed:20230814).</text>
</comment>
<comment type="similarity">
    <text evidence="4">Belongs to the SBNO family.</text>
</comment>
<accession>O01737</accession>
<accession>D5LYH1</accession>
<sequence length="1866" mass="205252">MDDILSAALAESGLDFLCQQSSPTPSTSGSIHDDAGQSFSNNTHTPSVSQFFDETSNDSHSSSAYYTPMATPFVSTEDGGVPTSFFGMDEEDGGCTIMTTAGTSGSNNIDGIEDAGGGMYYPHVKVIPRKHTAPTVNQSEPSTPTVTIVPKKEDPLFETNTADSPTPSGDTSTTASYEGNDGLEDQETTSDRQNPMFVQTARSTDGRLDTPSTSATVSPHITSSLTQRSHTSSPASSASEGTVVPPRKKGLPITTGSIVKRTVQTKDGLQTQYLKAFVNENGEKIYKLLSPVAASAVARGTLPPGMGRGGSTIGRGGTMVNKNGERLMVVKNHVGPNGQMLVKRMVSPAGTRIVANGGQGRGQPIYRAVDGSNGPTHLLRRTTTTGQPTRGAPVGMAARHAVRGGTVYGGGNGYRVNLVGRGTGGSTMVHHQPLNRISSQRSVAPVGRVLNRGALRNGAQQPLHVSTSSPAFHYMEEQPSPTTNGMVIQAKTPGAGVIQARHMQSQQSFPSGGPARVLMNRSSTNAGLSRMVGGGYDQQLPTAPNGRLMIPSTAVRVPGSGMASPRLQTTPQPLTKSQKAKDEMKMAYQVGREEALQQRRNDLEDDEENLGYAETYSEYTPAKLRSGMAHPDSVVESASLSSVSPPDVKYQISIPEYLIDMGHISALQLEAVIYACQMHERRMPSGERYGYLIGDGAGVGKGRTVACIIFENYLQGRKRAIWLSVSSDLKFDAERDLRDCGAPNIPVYALNKMKYAKISGKENGSIKKGVMFATYTSLIGECRGAKSRKYRSRISQLIQWFGQDYDGVIILDECHRAKNLVPTAGAKPTKTGRMVLELQKALPNARVVYASATGATEPRNMAYMTRLGLWGERQAFPEFHDFISAVERRGVGAMEIVAMDMKQRGLYLARQLSFRGVSFAVQEVQLSSEFVKMYDAAVKLWMEARRQFQTVIETMDEEERSTCKTVWGQFWACHQRFFKYLCIAAKVDTCVQLSREAIKAKKCVVIGLQSTGESATLETLEEMGGELNEFVSTAKTVLYGLIDKHFPTDASFSMGDRDIFKDFDDFERPAKRRKTRETLSFLGDVGFDTWTGVTTGMGGRVGDGVTKNITRGLSGIGRSSMSSSTGNTNNEDANSTTSESSDGSDDEVENDMISENGGESGDLESAREEAEGARTLEDGEQDEWVKALLAEAESSSDDSDEEVVKDEDEDEEAESKSGETHEQEEEFNPFMCDFTNDDPWAHNQQIVEDTPQKDRKAKKRKRDEEEAERLREKVRKREERREKKRRRAIRRAEREKQRRNEELQARGSATDFITSSRICGNGSGEQDDINPMLIKTELLAAVERLAPSLPANTLDQLIDEMGGPEYVAEMTGRRGHMVTSETGDVMYQRRNANAEVSLELINMEEKEKFMRGEKLIAIISEAASSGISLQSDRRAINKRRRVHITLELPWSADKAIQQFGRTHRSNQVSGPEYVFLISELAGEKRFASIVAKRLESLGALTHGDRRATETRDLSQFNMDNKYGRVALDTLLKTVIGQAGTPLIDPPKDYKAGEFFEDMRLYMEGVGLLAKNKTGQYTIEKEAATIPKFLNRILGLPVHAQNSLFHYFSEIVAELIAQSKHDGTYDTGIMDLGTGDDQVRKLETRVFTGRVDNGSFRVEIHKIGVERGVSWEEAMELHKEHSNDDDGFYICHPGGANTANTKKVAALVYGIGKIRMDNGARLYAITRPSTGRSPKLMTMADLSKRFHKVSIDEAKEVWKQQYDSAANMCQHNYVYGKCRTESNGTYCEVGRRTRTYFVLSGSVLSVWPIVEEVLAGSDRKSSRMQVIRVRTEQDQKIVGLLVLPTHVRHLVQQLETHCGRSYVKTEP</sequence>
<organism evidence="5">
    <name type="scientific">Caenorhabditis elegans</name>
    <dbReference type="NCBI Taxonomy" id="6239"/>
    <lineage>
        <taxon>Eukaryota</taxon>
        <taxon>Metazoa</taxon>
        <taxon>Ecdysozoa</taxon>
        <taxon>Nematoda</taxon>
        <taxon>Chromadorea</taxon>
        <taxon>Rhabditida</taxon>
        <taxon>Rhabditina</taxon>
        <taxon>Rhabditomorpha</taxon>
        <taxon>Rhabditoidea</taxon>
        <taxon>Rhabditidae</taxon>
        <taxon>Peloderinae</taxon>
        <taxon>Caenorhabditis</taxon>
    </lineage>
</organism>
<proteinExistence type="evidence at protein level"/>